<comment type="catalytic activity">
    <reaction evidence="1">
        <text>1-(2-carboxyphenylamino)-1-deoxy-D-ribulose 5-phosphate + H(+) = (1S,2R)-1-C-(indol-3-yl)glycerol 3-phosphate + CO2 + H2O</text>
        <dbReference type="Rhea" id="RHEA:23476"/>
        <dbReference type="ChEBI" id="CHEBI:15377"/>
        <dbReference type="ChEBI" id="CHEBI:15378"/>
        <dbReference type="ChEBI" id="CHEBI:16526"/>
        <dbReference type="ChEBI" id="CHEBI:58613"/>
        <dbReference type="ChEBI" id="CHEBI:58866"/>
        <dbReference type="EC" id="4.1.1.48"/>
    </reaction>
</comment>
<comment type="pathway">
    <text evidence="1">Amino-acid biosynthesis; L-tryptophan biosynthesis; L-tryptophan from chorismate: step 4/5.</text>
</comment>
<comment type="similarity">
    <text evidence="1">Belongs to the TrpC family.</text>
</comment>
<keyword id="KW-0028">Amino-acid biosynthesis</keyword>
<keyword id="KW-0057">Aromatic amino acid biosynthesis</keyword>
<keyword id="KW-0210">Decarboxylase</keyword>
<keyword id="KW-0456">Lyase</keyword>
<keyword id="KW-1185">Reference proteome</keyword>
<keyword id="KW-0822">Tryptophan biosynthesis</keyword>
<protein>
    <recommendedName>
        <fullName evidence="1">Indole-3-glycerol phosphate synthase</fullName>
        <shortName evidence="1">IGPS</shortName>
        <ecNumber evidence="1">4.1.1.48</ecNumber>
    </recommendedName>
</protein>
<reference key="1">
    <citation type="journal article" date="2003" name="Proc. Natl. Acad. Sci. U.S.A.">
        <title>Genome sequence of the cyanobacterium Prochlorococcus marinus SS120, a nearly minimal oxyphototrophic genome.</title>
        <authorList>
            <person name="Dufresne A."/>
            <person name="Salanoubat M."/>
            <person name="Partensky F."/>
            <person name="Artiguenave F."/>
            <person name="Axmann I.M."/>
            <person name="Barbe V."/>
            <person name="Duprat S."/>
            <person name="Galperin M.Y."/>
            <person name="Koonin E.V."/>
            <person name="Le Gall F."/>
            <person name="Makarova K.S."/>
            <person name="Ostrowski M."/>
            <person name="Oztas S."/>
            <person name="Robert C."/>
            <person name="Rogozin I.B."/>
            <person name="Scanlan D.J."/>
            <person name="Tandeau de Marsac N."/>
            <person name="Weissenbach J."/>
            <person name="Wincker P."/>
            <person name="Wolf Y.I."/>
            <person name="Hess W.R."/>
        </authorList>
    </citation>
    <scope>NUCLEOTIDE SEQUENCE [LARGE SCALE GENOMIC DNA]</scope>
    <source>
        <strain>SARG / CCMP1375 / SS120</strain>
    </source>
</reference>
<accession>Q7VAT3</accession>
<gene>
    <name evidence="1" type="primary">trpC</name>
    <name type="ordered locus">Pro_1371</name>
</gene>
<feature type="chain" id="PRO_1000018524" description="Indole-3-glycerol phosphate synthase">
    <location>
        <begin position="1"/>
        <end position="293"/>
    </location>
</feature>
<organism>
    <name type="scientific">Prochlorococcus marinus (strain SARG / CCMP1375 / SS120)</name>
    <dbReference type="NCBI Taxonomy" id="167539"/>
    <lineage>
        <taxon>Bacteria</taxon>
        <taxon>Bacillati</taxon>
        <taxon>Cyanobacteriota</taxon>
        <taxon>Cyanophyceae</taxon>
        <taxon>Synechococcales</taxon>
        <taxon>Prochlorococcaceae</taxon>
        <taxon>Prochlorococcus</taxon>
    </lineage>
</organism>
<dbReference type="EC" id="4.1.1.48" evidence="1"/>
<dbReference type="EMBL" id="AE017126">
    <property type="protein sequence ID" value="AAQ00415.1"/>
    <property type="molecule type" value="Genomic_DNA"/>
</dbReference>
<dbReference type="RefSeq" id="NP_875762.1">
    <property type="nucleotide sequence ID" value="NC_005042.1"/>
</dbReference>
<dbReference type="RefSeq" id="WP_011125522.1">
    <property type="nucleotide sequence ID" value="NC_005042.1"/>
</dbReference>
<dbReference type="SMR" id="Q7VAT3"/>
<dbReference type="STRING" id="167539.Pro_1371"/>
<dbReference type="EnsemblBacteria" id="AAQ00415">
    <property type="protein sequence ID" value="AAQ00415"/>
    <property type="gene ID" value="Pro_1371"/>
</dbReference>
<dbReference type="KEGG" id="pma:Pro_1371"/>
<dbReference type="PATRIC" id="fig|167539.5.peg.1438"/>
<dbReference type="eggNOG" id="COG0134">
    <property type="taxonomic scope" value="Bacteria"/>
</dbReference>
<dbReference type="HOGENOM" id="CLU_034247_1_0_3"/>
<dbReference type="OrthoDB" id="9804217at2"/>
<dbReference type="UniPathway" id="UPA00035">
    <property type="reaction ID" value="UER00043"/>
</dbReference>
<dbReference type="Proteomes" id="UP000001420">
    <property type="component" value="Chromosome"/>
</dbReference>
<dbReference type="GO" id="GO:0004425">
    <property type="term" value="F:indole-3-glycerol-phosphate synthase activity"/>
    <property type="evidence" value="ECO:0007669"/>
    <property type="project" value="UniProtKB-UniRule"/>
</dbReference>
<dbReference type="GO" id="GO:0004640">
    <property type="term" value="F:phosphoribosylanthranilate isomerase activity"/>
    <property type="evidence" value="ECO:0007669"/>
    <property type="project" value="TreeGrafter"/>
</dbReference>
<dbReference type="GO" id="GO:0000162">
    <property type="term" value="P:L-tryptophan biosynthetic process"/>
    <property type="evidence" value="ECO:0007669"/>
    <property type="project" value="UniProtKB-UniRule"/>
</dbReference>
<dbReference type="CDD" id="cd00331">
    <property type="entry name" value="IGPS"/>
    <property type="match status" value="1"/>
</dbReference>
<dbReference type="FunFam" id="3.20.20.70:FF:000024">
    <property type="entry name" value="Indole-3-glycerol phosphate synthase"/>
    <property type="match status" value="1"/>
</dbReference>
<dbReference type="Gene3D" id="3.20.20.70">
    <property type="entry name" value="Aldolase class I"/>
    <property type="match status" value="1"/>
</dbReference>
<dbReference type="HAMAP" id="MF_00134_B">
    <property type="entry name" value="IGPS_B"/>
    <property type="match status" value="1"/>
</dbReference>
<dbReference type="InterPro" id="IPR013785">
    <property type="entry name" value="Aldolase_TIM"/>
</dbReference>
<dbReference type="InterPro" id="IPR045186">
    <property type="entry name" value="Indole-3-glycerol_P_synth"/>
</dbReference>
<dbReference type="InterPro" id="IPR013798">
    <property type="entry name" value="Indole-3-glycerol_P_synth_dom"/>
</dbReference>
<dbReference type="InterPro" id="IPR001468">
    <property type="entry name" value="Indole-3-GlycerolPSynthase_CS"/>
</dbReference>
<dbReference type="InterPro" id="IPR011060">
    <property type="entry name" value="RibuloseP-bd_barrel"/>
</dbReference>
<dbReference type="NCBIfam" id="NF001372">
    <property type="entry name" value="PRK00278.1-4"/>
    <property type="match status" value="1"/>
</dbReference>
<dbReference type="NCBIfam" id="NF001377">
    <property type="entry name" value="PRK00278.2-4"/>
    <property type="match status" value="1"/>
</dbReference>
<dbReference type="PANTHER" id="PTHR22854:SF2">
    <property type="entry name" value="INDOLE-3-GLYCEROL-PHOSPHATE SYNTHASE"/>
    <property type="match status" value="1"/>
</dbReference>
<dbReference type="PANTHER" id="PTHR22854">
    <property type="entry name" value="TRYPTOPHAN BIOSYNTHESIS PROTEIN"/>
    <property type="match status" value="1"/>
</dbReference>
<dbReference type="Pfam" id="PF00218">
    <property type="entry name" value="IGPS"/>
    <property type="match status" value="1"/>
</dbReference>
<dbReference type="SUPFAM" id="SSF51366">
    <property type="entry name" value="Ribulose-phoshate binding barrel"/>
    <property type="match status" value="1"/>
</dbReference>
<dbReference type="PROSITE" id="PS00614">
    <property type="entry name" value="IGPS"/>
    <property type="match status" value="1"/>
</dbReference>
<name>TRPC_PROMA</name>
<proteinExistence type="inferred from homology"/>
<sequence length="293" mass="32544">MEIRRRPPNPKVKVANLEYAIPHEESEPRNILEKIVWEKDREVELARHRLPLPKLIAKIEKLSDTKNFLQTLKDSVTSPAVIAEIKKASPSRGLIREDFKPGDIAIAYQKGGATCLSVLTDKTFFQGGFDVLADVRKIIDIPLLCKDFILHPYQIYQARASGADAILLIAAILSDQDLMYLNKIALSLGLSILVEVHDAAELNRVLRLGGFPLIGINNRDLKTFETDLTTTCKVATECSNLLKEQDVLLVSESGIFTREDLQKVASFGASAVLIGESLMRQKDLTNALKELIG</sequence>
<evidence type="ECO:0000255" key="1">
    <source>
        <dbReference type="HAMAP-Rule" id="MF_00134"/>
    </source>
</evidence>